<gene>
    <name type="ordered locus">RSKD131_2757</name>
</gene>
<organism>
    <name type="scientific">Cereibacter sphaeroides (strain KD131 / KCTC 12085)</name>
    <name type="common">Rhodobacter sphaeroides</name>
    <dbReference type="NCBI Taxonomy" id="557760"/>
    <lineage>
        <taxon>Bacteria</taxon>
        <taxon>Pseudomonadati</taxon>
        <taxon>Pseudomonadota</taxon>
        <taxon>Alphaproteobacteria</taxon>
        <taxon>Rhodobacterales</taxon>
        <taxon>Paracoccaceae</taxon>
        <taxon>Cereibacter</taxon>
    </lineage>
</organism>
<proteinExistence type="inferred from homology"/>
<comment type="similarity">
    <text evidence="1">Belongs to the UPF0246 family.</text>
</comment>
<sequence>MLAVLSPAKRLAARPALDLPADLAPSEPRLQDQADALARVARDLTAADLRRLMHISEPLARLNVARFAEFHEARNAAVPAVALFDGDTYAGLEARTMDADALRWAQERICILSGLYGLLRPLDRIQPHRLEMGTRLATERGVTLYDFWGDRIAEALNTRAAETGARVLVNCASVEYFTAADRAALKLPVITPTFLEERNGERKIVSFWAKRARGAMARFIAENRLNDPADLRAFRAGGYAYEPDLSTDERPVFLRAG</sequence>
<reference key="1">
    <citation type="journal article" date="2009" name="J. Bacteriol.">
        <title>Complete genome sequence of Rhodobacter sphaeroides KD131.</title>
        <authorList>
            <person name="Lim S.-K."/>
            <person name="Kim S.J."/>
            <person name="Cha S.H."/>
            <person name="Oh Y.-K."/>
            <person name="Rhee H.-J."/>
            <person name="Kim M.-S."/>
            <person name="Lee J.K."/>
        </authorList>
    </citation>
    <scope>NUCLEOTIDE SEQUENCE [LARGE SCALE GENOMIC DNA]</scope>
    <source>
        <strain>KD131 / KCTC 12085</strain>
    </source>
</reference>
<feature type="chain" id="PRO_1000200423" description="UPF0246 protein RSKD131_2757">
    <location>
        <begin position="1"/>
        <end position="257"/>
    </location>
</feature>
<accession>B9KQL7</accession>
<dbReference type="EMBL" id="CP001150">
    <property type="protein sequence ID" value="ACM02617.1"/>
    <property type="molecule type" value="Genomic_DNA"/>
</dbReference>
<dbReference type="RefSeq" id="WP_015921644.1">
    <property type="nucleotide sequence ID" value="NC_011963.1"/>
</dbReference>
<dbReference type="SMR" id="B9KQL7"/>
<dbReference type="GeneID" id="67448128"/>
<dbReference type="KEGG" id="rsk:RSKD131_2757"/>
<dbReference type="HOGENOM" id="CLU_061989_0_0_5"/>
<dbReference type="GO" id="GO:0005829">
    <property type="term" value="C:cytosol"/>
    <property type="evidence" value="ECO:0007669"/>
    <property type="project" value="TreeGrafter"/>
</dbReference>
<dbReference type="GO" id="GO:0033194">
    <property type="term" value="P:response to hydroperoxide"/>
    <property type="evidence" value="ECO:0007669"/>
    <property type="project" value="TreeGrafter"/>
</dbReference>
<dbReference type="HAMAP" id="MF_00652">
    <property type="entry name" value="UPF0246"/>
    <property type="match status" value="1"/>
</dbReference>
<dbReference type="InterPro" id="IPR005583">
    <property type="entry name" value="YaaA"/>
</dbReference>
<dbReference type="NCBIfam" id="NF002542">
    <property type="entry name" value="PRK02101.1-3"/>
    <property type="match status" value="1"/>
</dbReference>
<dbReference type="PANTHER" id="PTHR30283:SF4">
    <property type="entry name" value="PEROXIDE STRESS RESISTANCE PROTEIN YAAA"/>
    <property type="match status" value="1"/>
</dbReference>
<dbReference type="PANTHER" id="PTHR30283">
    <property type="entry name" value="PEROXIDE STRESS RESPONSE PROTEIN YAAA"/>
    <property type="match status" value="1"/>
</dbReference>
<dbReference type="Pfam" id="PF03883">
    <property type="entry name" value="H2O2_YaaD"/>
    <property type="match status" value="1"/>
</dbReference>
<protein>
    <recommendedName>
        <fullName evidence="1">UPF0246 protein RSKD131_2757</fullName>
    </recommendedName>
</protein>
<evidence type="ECO:0000255" key="1">
    <source>
        <dbReference type="HAMAP-Rule" id="MF_00652"/>
    </source>
</evidence>
<name>Y2757_CERSK</name>